<protein>
    <recommendedName>
        <fullName evidence="1">Probable transcriptional regulatory protein SAS0634</fullName>
    </recommendedName>
</protein>
<sequence>MGRKWNNIKEKKAQKDKNTSRIYAKFGKEIYVAAKSGEPNPESNQALRLVLERAKTYSVPNHIIEKAIDKAKGAGDENFDHLRYEGFGPSGSMLIVDALTNNVNRTASDVRAAFGKNGGNMGVSGSVAYMFDHVATFGIEGKSVDEILETLMEQDVDVNDVIDDNGLTIVYAEPDQFAVVQDALRAAGVEEFKVAEFEMLPQTDIELSEADQVTFEKLIDALEDLEDVQNVFHNVDLK</sequence>
<reference key="1">
    <citation type="journal article" date="2004" name="Proc. Natl. Acad. Sci. U.S.A.">
        <title>Complete genomes of two clinical Staphylococcus aureus strains: evidence for the rapid evolution of virulence and drug resistance.</title>
        <authorList>
            <person name="Holden M.T.G."/>
            <person name="Feil E.J."/>
            <person name="Lindsay J.A."/>
            <person name="Peacock S.J."/>
            <person name="Day N.P.J."/>
            <person name="Enright M.C."/>
            <person name="Foster T.J."/>
            <person name="Moore C.E."/>
            <person name="Hurst L."/>
            <person name="Atkin R."/>
            <person name="Barron A."/>
            <person name="Bason N."/>
            <person name="Bentley S.D."/>
            <person name="Chillingworth C."/>
            <person name="Chillingworth T."/>
            <person name="Churcher C."/>
            <person name="Clark L."/>
            <person name="Corton C."/>
            <person name="Cronin A."/>
            <person name="Doggett J."/>
            <person name="Dowd L."/>
            <person name="Feltwell T."/>
            <person name="Hance Z."/>
            <person name="Harris B."/>
            <person name="Hauser H."/>
            <person name="Holroyd S."/>
            <person name="Jagels K."/>
            <person name="James K.D."/>
            <person name="Lennard N."/>
            <person name="Line A."/>
            <person name="Mayes R."/>
            <person name="Moule S."/>
            <person name="Mungall K."/>
            <person name="Ormond D."/>
            <person name="Quail M.A."/>
            <person name="Rabbinowitsch E."/>
            <person name="Rutherford K.M."/>
            <person name="Sanders M."/>
            <person name="Sharp S."/>
            <person name="Simmonds M."/>
            <person name="Stevens K."/>
            <person name="Whitehead S."/>
            <person name="Barrell B.G."/>
            <person name="Spratt B.G."/>
            <person name="Parkhill J."/>
        </authorList>
    </citation>
    <scope>NUCLEOTIDE SEQUENCE [LARGE SCALE GENOMIC DNA]</scope>
    <source>
        <strain>MSSA476</strain>
    </source>
</reference>
<name>Y634_STAAS</name>
<dbReference type="EMBL" id="BX571857">
    <property type="protein sequence ID" value="CAG42410.1"/>
    <property type="molecule type" value="Genomic_DNA"/>
</dbReference>
<dbReference type="RefSeq" id="WP_000532966.1">
    <property type="nucleotide sequence ID" value="NC_002953.3"/>
</dbReference>
<dbReference type="SMR" id="Q6GBG1"/>
<dbReference type="KEGG" id="sas:SAS0634"/>
<dbReference type="HOGENOM" id="CLU_062974_2_0_9"/>
<dbReference type="GO" id="GO:0005829">
    <property type="term" value="C:cytosol"/>
    <property type="evidence" value="ECO:0007669"/>
    <property type="project" value="TreeGrafter"/>
</dbReference>
<dbReference type="GO" id="GO:0003677">
    <property type="term" value="F:DNA binding"/>
    <property type="evidence" value="ECO:0007669"/>
    <property type="project" value="UniProtKB-UniRule"/>
</dbReference>
<dbReference type="GO" id="GO:0006355">
    <property type="term" value="P:regulation of DNA-templated transcription"/>
    <property type="evidence" value="ECO:0007669"/>
    <property type="project" value="UniProtKB-UniRule"/>
</dbReference>
<dbReference type="FunFam" id="1.10.10.200:FF:000003">
    <property type="entry name" value="Probable transcriptional regulatory protein YeeN"/>
    <property type="match status" value="1"/>
</dbReference>
<dbReference type="Gene3D" id="1.10.10.200">
    <property type="match status" value="1"/>
</dbReference>
<dbReference type="Gene3D" id="3.30.70.980">
    <property type="match status" value="2"/>
</dbReference>
<dbReference type="HAMAP" id="MF_00693">
    <property type="entry name" value="Transcrip_reg_TACO1"/>
    <property type="match status" value="1"/>
</dbReference>
<dbReference type="HAMAP" id="MF_00918">
    <property type="entry name" value="Transcrip_reg_TACO1_YeeN"/>
    <property type="match status" value="1"/>
</dbReference>
<dbReference type="InterPro" id="IPR017856">
    <property type="entry name" value="Integrase-like_N"/>
</dbReference>
<dbReference type="InterPro" id="IPR048300">
    <property type="entry name" value="TACO1_YebC-like_2nd/3rd_dom"/>
</dbReference>
<dbReference type="InterPro" id="IPR049083">
    <property type="entry name" value="TACO1_YebC_N"/>
</dbReference>
<dbReference type="InterPro" id="IPR002876">
    <property type="entry name" value="Transcrip_reg_TACO1-like"/>
</dbReference>
<dbReference type="InterPro" id="IPR026564">
    <property type="entry name" value="Transcrip_reg_TACO1-like_dom3"/>
</dbReference>
<dbReference type="InterPro" id="IPR026562">
    <property type="entry name" value="Transcrip_reg_TACO1_YeeN"/>
</dbReference>
<dbReference type="InterPro" id="IPR029072">
    <property type="entry name" value="YebC-like"/>
</dbReference>
<dbReference type="NCBIfam" id="NF001030">
    <property type="entry name" value="PRK00110.1"/>
    <property type="match status" value="1"/>
</dbReference>
<dbReference type="NCBIfam" id="NF009044">
    <property type="entry name" value="PRK12378.1"/>
    <property type="match status" value="1"/>
</dbReference>
<dbReference type="NCBIfam" id="TIGR01033">
    <property type="entry name" value="YebC/PmpR family DNA-binding transcriptional regulator"/>
    <property type="match status" value="1"/>
</dbReference>
<dbReference type="PANTHER" id="PTHR12532">
    <property type="entry name" value="TRANSLATIONAL ACTIVATOR OF CYTOCHROME C OXIDASE 1"/>
    <property type="match status" value="1"/>
</dbReference>
<dbReference type="PANTHER" id="PTHR12532:SF0">
    <property type="entry name" value="TRANSLATIONAL ACTIVATOR OF CYTOCHROME C OXIDASE 1"/>
    <property type="match status" value="1"/>
</dbReference>
<dbReference type="Pfam" id="PF20772">
    <property type="entry name" value="TACO1_YebC_N"/>
    <property type="match status" value="1"/>
</dbReference>
<dbReference type="Pfam" id="PF01709">
    <property type="entry name" value="Transcrip_reg"/>
    <property type="match status" value="1"/>
</dbReference>
<dbReference type="SUPFAM" id="SSF75625">
    <property type="entry name" value="YebC-like"/>
    <property type="match status" value="1"/>
</dbReference>
<proteinExistence type="inferred from homology"/>
<keyword id="KW-0963">Cytoplasm</keyword>
<keyword id="KW-0238">DNA-binding</keyword>
<keyword id="KW-0804">Transcription</keyword>
<keyword id="KW-0805">Transcription regulation</keyword>
<evidence type="ECO:0000255" key="1">
    <source>
        <dbReference type="HAMAP-Rule" id="MF_00918"/>
    </source>
</evidence>
<organism>
    <name type="scientific">Staphylococcus aureus (strain MSSA476)</name>
    <dbReference type="NCBI Taxonomy" id="282459"/>
    <lineage>
        <taxon>Bacteria</taxon>
        <taxon>Bacillati</taxon>
        <taxon>Bacillota</taxon>
        <taxon>Bacilli</taxon>
        <taxon>Bacillales</taxon>
        <taxon>Staphylococcaceae</taxon>
        <taxon>Staphylococcus</taxon>
    </lineage>
</organism>
<accession>Q6GBG1</accession>
<comment type="subcellular location">
    <subcellularLocation>
        <location evidence="1">Cytoplasm</location>
    </subcellularLocation>
</comment>
<comment type="similarity">
    <text evidence="1">Belongs to the TACO1 family. YeeN subfamily.</text>
</comment>
<gene>
    <name type="ordered locus">SAS0634</name>
</gene>
<feature type="chain" id="PRO_0000175895" description="Probable transcriptional regulatory protein SAS0634">
    <location>
        <begin position="1"/>
        <end position="238"/>
    </location>
</feature>